<proteinExistence type="evidence at protein level"/>
<comment type="function">
    <text evidence="4">Probable transcription factor, involved in regulation of sexually dimorphic synaptic connectivity and behavior (PubMed:33021200). Promotes pruning of phasmid neuron synaptic connections in hermaphrodite animals during sexual maturation (PubMed:33021200).</text>
</comment>
<comment type="subunit">
    <text evidence="4">Monomer (PubMed:33021200). May interact with ubiquitin; the interaction may stabilize dmd-4, especially in neurons (PubMed:33021200).</text>
</comment>
<comment type="subcellular location">
    <subcellularLocation>
        <location evidence="2">Nucleus</location>
    </subcellularLocation>
</comment>
<comment type="tissue specificity">
    <text evidence="4">Expressed in PHA and PHB phasmid sensory neuron pairs of adult hermaphrodites, but not adult males (PubMed:33021200). Expressed in sexually non-dimorphic manner in some head sensory neurons (AFD, AWB, AWC, ASE, ASG, ASH, BAG), a single pharyngeal neuron (I5) and a number of MS blastomere derived cells - the head mesodermal cell, (hmc), a single pharyngeal muscle (pm8), a pharyngeal gland cell pair (g2L/R) and four of the six pharyngeal intestinal valve cells (PubMed:33021200).</text>
</comment>
<comment type="developmental stage">
    <text evidence="4">First expressed in mid-embryonic development, in the head mesodermal cell, (hmc), a single pharyngeal muscle (pm8), a pharyngeal gland cell pair (g2L/R) and four of the six pharyngeal intestinal valve cells (PubMed:33021200). Around hatching, expressed in some head and tail sensory neurons, including the phasmid neurons PHA and PHB (PubMed:33021200). During larval development, expression is the same in both sexes until the larval L4 stage to adult molt, when expression in PHA and PHB in the male disappears, but continues in the hermaphrodite (PubMed:33021200).</text>
</comment>
<comment type="domain">
    <text evidence="4">DMA domain may interact with ubiquitin.</text>
</comment>
<comment type="disruption phenotype">
    <text evidence="4">Causes embryonic lethality (PubMed:33021200). Abnormal anterior intestinal function (PubMed:33021200).</text>
</comment>
<comment type="similarity">
    <text evidence="5">Belongs to the DMRT family.</text>
</comment>
<organism evidence="6">
    <name type="scientific">Caenorhabditis elegans</name>
    <dbReference type="NCBI Taxonomy" id="6239"/>
    <lineage>
        <taxon>Eukaryota</taxon>
        <taxon>Metazoa</taxon>
        <taxon>Ecdysozoa</taxon>
        <taxon>Nematoda</taxon>
        <taxon>Chromadorea</taxon>
        <taxon>Rhabditida</taxon>
        <taxon>Rhabditina</taxon>
        <taxon>Rhabditomorpha</taxon>
        <taxon>Rhabditoidea</taxon>
        <taxon>Rhabditidae</taxon>
        <taxon>Peloderinae</taxon>
        <taxon>Caenorhabditis</taxon>
    </lineage>
</organism>
<name>DMD4_CAEEL</name>
<gene>
    <name evidence="7" type="primary">dmd-4</name>
    <name evidence="7" type="ORF">C27C12.6</name>
</gene>
<protein>
    <recommendedName>
        <fullName evidence="5">Doublesex- and mab-3-related transcription factor dmd-4</fullName>
    </recommendedName>
</protein>
<reference evidence="6" key="1">
    <citation type="journal article" date="1998" name="Science">
        <title>Genome sequence of the nematode C. elegans: a platform for investigating biology.</title>
        <authorList>
            <consortium name="The C. elegans sequencing consortium"/>
        </authorList>
    </citation>
    <scope>NUCLEOTIDE SEQUENCE [LARGE SCALE GENOMIC DNA]</scope>
    <source>
        <strain evidence="6">Bristol N2</strain>
    </source>
</reference>
<reference evidence="5" key="2">
    <citation type="journal article" date="2020" name="Elife">
        <title>Ubiquitin-dependent regulation of a conserved DMRT protein controls sexually dimorphic synaptic connectivity and behavior.</title>
        <authorList>
            <person name="Bayer E.A."/>
            <person name="Stecky R.C."/>
            <person name="Neal L."/>
            <person name="Katsamba P.S."/>
            <person name="Ahlsen G."/>
            <person name="Balaji V."/>
            <person name="Hoppe T."/>
            <person name="Shapiro L."/>
            <person name="Oren-Suissa M."/>
            <person name="Hobert O."/>
        </authorList>
    </citation>
    <scope>FUNCTION</scope>
    <scope>INTERACTION WITH UBIQUITIN</scope>
    <scope>TISSUE SPECIFICITY</scope>
    <scope>DEVELOPMENTAL STAGE</scope>
    <scope>DOMAIN</scope>
    <scope>DISRUPTION PHENOTYPE</scope>
    <scope>MUTAGENESIS OF LEU-174</scope>
</reference>
<sequence length="260" mass="29365">MMIGNLHVFPNGRIERERKPKCARCRNHGLVSWLKGHKRHCKYKECACEKCNLIAERQRVMAAQVALKRRQATEDAIALGLRVVAGQAIDRLPQGPVWNTAGGEDEDMDYLDEEIEEKPPTPVSEELVPLKRKKVEETYELSSFSPIELLMTLFCEHEKHVLELVLEACHGNVLQAIEHFANVRRVKNINQMKLFAAATRMDHVFPNMTNFILPKQSFLIDSLLEQPTFPVSSQASTSTKTCDSSSVDSISPNSSTFESS</sequence>
<dbReference type="EMBL" id="BX284606">
    <property type="protein sequence ID" value="CAA93739.2"/>
    <property type="molecule type" value="Genomic_DNA"/>
</dbReference>
<dbReference type="PIR" id="E89714">
    <property type="entry name" value="E89714"/>
</dbReference>
<dbReference type="PIR" id="T19516">
    <property type="entry name" value="T19516"/>
</dbReference>
<dbReference type="RefSeq" id="NP_510466.1">
    <property type="nucleotide sequence ID" value="NM_078065.5"/>
</dbReference>
<dbReference type="SMR" id="Q18248"/>
<dbReference type="FunCoup" id="Q18248">
    <property type="interactions" value="325"/>
</dbReference>
<dbReference type="IntAct" id="Q18248">
    <property type="interactions" value="2"/>
</dbReference>
<dbReference type="STRING" id="6239.C27C12.6.1"/>
<dbReference type="PaxDb" id="6239-C27C12.6"/>
<dbReference type="EnsemblMetazoa" id="C27C12.6.1">
    <property type="protein sequence ID" value="C27C12.6.1"/>
    <property type="gene ID" value="WBGene00007776"/>
</dbReference>
<dbReference type="GeneID" id="181581"/>
<dbReference type="KEGG" id="cel:CELE_C27C12.6"/>
<dbReference type="UCSC" id="C27C12.6">
    <property type="organism name" value="c. elegans"/>
</dbReference>
<dbReference type="AGR" id="WB:WBGene00007776"/>
<dbReference type="CTD" id="181581"/>
<dbReference type="WormBase" id="C27C12.6">
    <property type="protein sequence ID" value="CE23560"/>
    <property type="gene ID" value="WBGene00007776"/>
    <property type="gene designation" value="dmd-4"/>
</dbReference>
<dbReference type="eggNOG" id="KOG3815">
    <property type="taxonomic scope" value="Eukaryota"/>
</dbReference>
<dbReference type="GeneTree" id="ENSGT00940000168442"/>
<dbReference type="HOGENOM" id="CLU_1086800_0_0_1"/>
<dbReference type="InParanoid" id="Q18248"/>
<dbReference type="OMA" id="HCKYKEC"/>
<dbReference type="OrthoDB" id="6162476at2759"/>
<dbReference type="PhylomeDB" id="Q18248"/>
<dbReference type="PRO" id="PR:Q18248"/>
<dbReference type="Proteomes" id="UP000001940">
    <property type="component" value="Chromosome X"/>
</dbReference>
<dbReference type="Bgee" id="WBGene00007776">
    <property type="expression patterns" value="Expressed in pharyngeal muscle cell (C elegans) and 3 other cell types or tissues"/>
</dbReference>
<dbReference type="GO" id="GO:0005634">
    <property type="term" value="C:nucleus"/>
    <property type="evidence" value="ECO:0000318"/>
    <property type="project" value="GO_Central"/>
</dbReference>
<dbReference type="GO" id="GO:0000981">
    <property type="term" value="F:DNA-binding transcription factor activity, RNA polymerase II-specific"/>
    <property type="evidence" value="ECO:0000318"/>
    <property type="project" value="GO_Central"/>
</dbReference>
<dbReference type="GO" id="GO:0046872">
    <property type="term" value="F:metal ion binding"/>
    <property type="evidence" value="ECO:0007669"/>
    <property type="project" value="UniProtKB-KW"/>
</dbReference>
<dbReference type="GO" id="GO:0000978">
    <property type="term" value="F:RNA polymerase II cis-regulatory region sequence-specific DNA binding"/>
    <property type="evidence" value="ECO:0000318"/>
    <property type="project" value="GO_Central"/>
</dbReference>
<dbReference type="GO" id="GO:0043130">
    <property type="term" value="F:ubiquitin binding"/>
    <property type="evidence" value="ECO:0000314"/>
    <property type="project" value="UniProtKB"/>
</dbReference>
<dbReference type="GO" id="GO:0006357">
    <property type="term" value="P:regulation of transcription by RNA polymerase II"/>
    <property type="evidence" value="ECO:0000318"/>
    <property type="project" value="GO_Central"/>
</dbReference>
<dbReference type="GO" id="GO:0007548">
    <property type="term" value="P:sex differentiation"/>
    <property type="evidence" value="ECO:0000318"/>
    <property type="project" value="GO_Central"/>
</dbReference>
<dbReference type="GO" id="GO:0098883">
    <property type="term" value="P:synapse pruning"/>
    <property type="evidence" value="ECO:0000315"/>
    <property type="project" value="UniProtKB"/>
</dbReference>
<dbReference type="CDD" id="cd14370">
    <property type="entry name" value="CUE_DMA"/>
    <property type="match status" value="1"/>
</dbReference>
<dbReference type="FunFam" id="4.10.1040.10:FF:000001">
    <property type="entry name" value="doublesex- and mab-3-related transcription factor 1"/>
    <property type="match status" value="1"/>
</dbReference>
<dbReference type="Gene3D" id="4.10.1040.10">
    <property type="entry name" value="DM DNA-binding domain"/>
    <property type="match status" value="1"/>
</dbReference>
<dbReference type="InterPro" id="IPR001275">
    <property type="entry name" value="DM_DNA-bd"/>
</dbReference>
<dbReference type="InterPro" id="IPR036407">
    <property type="entry name" value="DM_DNA-bd_sf"/>
</dbReference>
<dbReference type="InterPro" id="IPR005173">
    <property type="entry name" value="DMA"/>
</dbReference>
<dbReference type="InterPro" id="IPR026607">
    <property type="entry name" value="DMRT"/>
</dbReference>
<dbReference type="PANTHER" id="PTHR12322">
    <property type="entry name" value="DOUBLESEX AND MAB-3 RELATED TRANSCRIPTION FACTOR DMRT"/>
    <property type="match status" value="1"/>
</dbReference>
<dbReference type="PANTHER" id="PTHR12322:SF119">
    <property type="entry name" value="DOUBLESEX- AND MAB-3-RELATED TRANSCRIPTION FACTOR DMD-4"/>
    <property type="match status" value="1"/>
</dbReference>
<dbReference type="Pfam" id="PF00751">
    <property type="entry name" value="DM"/>
    <property type="match status" value="1"/>
</dbReference>
<dbReference type="Pfam" id="PF03474">
    <property type="entry name" value="DMA"/>
    <property type="match status" value="1"/>
</dbReference>
<dbReference type="SMART" id="SM00301">
    <property type="entry name" value="DM"/>
    <property type="match status" value="1"/>
</dbReference>
<dbReference type="SUPFAM" id="SSF82927">
    <property type="entry name" value="Cysteine-rich DNA binding domain, (DM domain)"/>
    <property type="match status" value="1"/>
</dbReference>
<dbReference type="PROSITE" id="PS40000">
    <property type="entry name" value="DM_1"/>
    <property type="match status" value="1"/>
</dbReference>
<dbReference type="PROSITE" id="PS50809">
    <property type="entry name" value="DM_2"/>
    <property type="match status" value="1"/>
</dbReference>
<evidence type="ECO:0000255" key="1"/>
<evidence type="ECO:0000255" key="2">
    <source>
        <dbReference type="PROSITE-ProRule" id="PRU00070"/>
    </source>
</evidence>
<evidence type="ECO:0000256" key="3">
    <source>
        <dbReference type="SAM" id="MobiDB-lite"/>
    </source>
</evidence>
<evidence type="ECO:0000269" key="4">
    <source>
    </source>
</evidence>
<evidence type="ECO:0000305" key="5"/>
<evidence type="ECO:0000312" key="6">
    <source>
        <dbReference type="Proteomes" id="UP000001940"/>
    </source>
</evidence>
<evidence type="ECO:0000312" key="7">
    <source>
        <dbReference type="WormBase" id="C27C12.6"/>
    </source>
</evidence>
<keyword id="KW-0217">Developmental protein</keyword>
<keyword id="KW-0238">DNA-binding</keyword>
<keyword id="KW-0479">Metal-binding</keyword>
<keyword id="KW-0539">Nucleus</keyword>
<keyword id="KW-1185">Reference proteome</keyword>
<keyword id="KW-0804">Transcription</keyword>
<keyword id="KW-0805">Transcription regulation</keyword>
<keyword id="KW-0862">Zinc</keyword>
<accession>Q18248</accession>
<feature type="chain" id="PRO_0000453458" description="Doublesex- and mab-3-related transcription factor dmd-4">
    <location>
        <begin position="1"/>
        <end position="260"/>
    </location>
</feature>
<feature type="domain" description="DMA" evidence="1">
    <location>
        <begin position="144"/>
        <end position="180"/>
    </location>
</feature>
<feature type="DNA-binding region" description="DM" evidence="2">
    <location>
        <begin position="22"/>
        <end position="69"/>
    </location>
</feature>
<feature type="region of interest" description="Disordered" evidence="3">
    <location>
        <begin position="232"/>
        <end position="260"/>
    </location>
</feature>
<feature type="compositionally biased region" description="Polar residues" evidence="3">
    <location>
        <begin position="232"/>
        <end position="243"/>
    </location>
</feature>
<feature type="compositionally biased region" description="Low complexity" evidence="3">
    <location>
        <begin position="244"/>
        <end position="260"/>
    </location>
</feature>
<feature type="mutagenesis site" description="In ot990; results in defective pruning on the PHB to AVG synaptic connection in hermaphrodites. May affect binding to ubiquitin." evidence="4">
    <original>L</original>
    <variation>R</variation>
    <location>
        <position position="174"/>
    </location>
</feature>